<dbReference type="EC" id="4.2.1.20" evidence="1"/>
<dbReference type="EMBL" id="CP000393">
    <property type="protein sequence ID" value="ABG50026.1"/>
    <property type="molecule type" value="Genomic_DNA"/>
</dbReference>
<dbReference type="RefSeq" id="WP_011610420.1">
    <property type="nucleotide sequence ID" value="NC_008312.1"/>
</dbReference>
<dbReference type="SMR" id="Q118P8"/>
<dbReference type="STRING" id="203124.Tery_0581"/>
<dbReference type="KEGG" id="ter:Tery_0581"/>
<dbReference type="eggNOG" id="COG0133">
    <property type="taxonomic scope" value="Bacteria"/>
</dbReference>
<dbReference type="HOGENOM" id="CLU_016734_3_1_3"/>
<dbReference type="OrthoDB" id="9766131at2"/>
<dbReference type="UniPathway" id="UPA00035">
    <property type="reaction ID" value="UER00044"/>
</dbReference>
<dbReference type="GO" id="GO:0005737">
    <property type="term" value="C:cytoplasm"/>
    <property type="evidence" value="ECO:0007669"/>
    <property type="project" value="TreeGrafter"/>
</dbReference>
<dbReference type="GO" id="GO:0004834">
    <property type="term" value="F:tryptophan synthase activity"/>
    <property type="evidence" value="ECO:0007669"/>
    <property type="project" value="UniProtKB-UniRule"/>
</dbReference>
<dbReference type="CDD" id="cd06446">
    <property type="entry name" value="Trp-synth_B"/>
    <property type="match status" value="1"/>
</dbReference>
<dbReference type="FunFam" id="3.40.50.1100:FF:000001">
    <property type="entry name" value="Tryptophan synthase beta chain"/>
    <property type="match status" value="1"/>
</dbReference>
<dbReference type="FunFam" id="3.40.50.1100:FF:000004">
    <property type="entry name" value="Tryptophan synthase beta chain"/>
    <property type="match status" value="1"/>
</dbReference>
<dbReference type="Gene3D" id="3.40.50.1100">
    <property type="match status" value="2"/>
</dbReference>
<dbReference type="HAMAP" id="MF_00133">
    <property type="entry name" value="Trp_synth_beta"/>
    <property type="match status" value="1"/>
</dbReference>
<dbReference type="InterPro" id="IPR006653">
    <property type="entry name" value="Trp_synth_b_CS"/>
</dbReference>
<dbReference type="InterPro" id="IPR006654">
    <property type="entry name" value="Trp_synth_beta"/>
</dbReference>
<dbReference type="InterPro" id="IPR023026">
    <property type="entry name" value="Trp_synth_beta/beta-like"/>
</dbReference>
<dbReference type="InterPro" id="IPR001926">
    <property type="entry name" value="TrpB-like_PALP"/>
</dbReference>
<dbReference type="InterPro" id="IPR036052">
    <property type="entry name" value="TrpB-like_PALP_sf"/>
</dbReference>
<dbReference type="NCBIfam" id="TIGR00263">
    <property type="entry name" value="trpB"/>
    <property type="match status" value="1"/>
</dbReference>
<dbReference type="PANTHER" id="PTHR48077:SF3">
    <property type="entry name" value="TRYPTOPHAN SYNTHASE"/>
    <property type="match status" value="1"/>
</dbReference>
<dbReference type="PANTHER" id="PTHR48077">
    <property type="entry name" value="TRYPTOPHAN SYNTHASE-RELATED"/>
    <property type="match status" value="1"/>
</dbReference>
<dbReference type="Pfam" id="PF00291">
    <property type="entry name" value="PALP"/>
    <property type="match status" value="1"/>
</dbReference>
<dbReference type="PIRSF" id="PIRSF001413">
    <property type="entry name" value="Trp_syn_beta"/>
    <property type="match status" value="1"/>
</dbReference>
<dbReference type="SUPFAM" id="SSF53686">
    <property type="entry name" value="Tryptophan synthase beta subunit-like PLP-dependent enzymes"/>
    <property type="match status" value="1"/>
</dbReference>
<dbReference type="PROSITE" id="PS00168">
    <property type="entry name" value="TRP_SYNTHASE_BETA"/>
    <property type="match status" value="1"/>
</dbReference>
<organism>
    <name type="scientific">Trichodesmium erythraeum (strain IMS101)</name>
    <dbReference type="NCBI Taxonomy" id="203124"/>
    <lineage>
        <taxon>Bacteria</taxon>
        <taxon>Bacillati</taxon>
        <taxon>Cyanobacteriota</taxon>
        <taxon>Cyanophyceae</taxon>
        <taxon>Oscillatoriophycideae</taxon>
        <taxon>Oscillatoriales</taxon>
        <taxon>Microcoleaceae</taxon>
        <taxon>Trichodesmium</taxon>
    </lineage>
</organism>
<proteinExistence type="inferred from homology"/>
<name>TRPB_TRIEI</name>
<gene>
    <name evidence="1" type="primary">trpB</name>
    <name type="ordered locus">Tery_0581</name>
</gene>
<evidence type="ECO:0000255" key="1">
    <source>
        <dbReference type="HAMAP-Rule" id="MF_00133"/>
    </source>
</evidence>
<protein>
    <recommendedName>
        <fullName evidence="1">Tryptophan synthase beta chain</fullName>
        <ecNumber evidence="1">4.2.1.20</ecNumber>
    </recommendedName>
</protein>
<accession>Q118P8</accession>
<sequence>MTITPLNPTSTQQPDSLGRFGKFGGKYVPETLMPALLQLETACKKYSQDPTFKQELQQLLRDYVGRPSPLYFAERLTAHYTKPDGTGPQIYLKREDLNHTGAHKINNALGQALLAQRMGKQRIIAETGAGQHGVATATVCARFGLKCVIYMGIHDMERQALNVFRMRLMGAEVRPVEAGTGTLKDATSEAIRDWVTNVETTHYILGSVAGPHPYPMMVRDFHAVIGVETRAQCLEKWNGLPDILMACVGGGSNAMGLFHEFINDPSVRMIGVEAAGKGVDTNKHAATLTLGRVGVLHGAMSYLLQDEEGQIIEPHSISAGLDYPGVGPEHSFLKDSGRVEYYSVTDNEAVAAFQRLSQLEGIIPALETAHAIAYLETLCPQLSGSPRIVFNCSGRGDKDVQTVGKFLEG</sequence>
<feature type="chain" id="PRO_1000018418" description="Tryptophan synthase beta chain">
    <location>
        <begin position="1"/>
        <end position="409"/>
    </location>
</feature>
<feature type="modified residue" description="N6-(pyridoxal phosphate)lysine" evidence="1">
    <location>
        <position position="104"/>
    </location>
</feature>
<keyword id="KW-0028">Amino-acid biosynthesis</keyword>
<keyword id="KW-0057">Aromatic amino acid biosynthesis</keyword>
<keyword id="KW-0456">Lyase</keyword>
<keyword id="KW-0663">Pyridoxal phosphate</keyword>
<keyword id="KW-0822">Tryptophan biosynthesis</keyword>
<comment type="function">
    <text evidence="1">The beta subunit is responsible for the synthesis of L-tryptophan from indole and L-serine.</text>
</comment>
<comment type="catalytic activity">
    <reaction evidence="1">
        <text>(1S,2R)-1-C-(indol-3-yl)glycerol 3-phosphate + L-serine = D-glyceraldehyde 3-phosphate + L-tryptophan + H2O</text>
        <dbReference type="Rhea" id="RHEA:10532"/>
        <dbReference type="ChEBI" id="CHEBI:15377"/>
        <dbReference type="ChEBI" id="CHEBI:33384"/>
        <dbReference type="ChEBI" id="CHEBI:57912"/>
        <dbReference type="ChEBI" id="CHEBI:58866"/>
        <dbReference type="ChEBI" id="CHEBI:59776"/>
        <dbReference type="EC" id="4.2.1.20"/>
    </reaction>
</comment>
<comment type="cofactor">
    <cofactor evidence="1">
        <name>pyridoxal 5'-phosphate</name>
        <dbReference type="ChEBI" id="CHEBI:597326"/>
    </cofactor>
</comment>
<comment type="pathway">
    <text evidence="1">Amino-acid biosynthesis; L-tryptophan biosynthesis; L-tryptophan from chorismate: step 5/5.</text>
</comment>
<comment type="subunit">
    <text evidence="1">Tetramer of two alpha and two beta chains.</text>
</comment>
<comment type="similarity">
    <text evidence="1">Belongs to the TrpB family.</text>
</comment>
<reference key="1">
    <citation type="journal article" date="2015" name="Proc. Natl. Acad. Sci. U.S.A.">
        <title>Trichodesmium genome maintains abundant, widespread noncoding DNA in situ, despite oligotrophic lifestyle.</title>
        <authorList>
            <person name="Walworth N."/>
            <person name="Pfreundt U."/>
            <person name="Nelson W.C."/>
            <person name="Mincer T."/>
            <person name="Heidelberg J.F."/>
            <person name="Fu F."/>
            <person name="Waterbury J.B."/>
            <person name="Glavina del Rio T."/>
            <person name="Goodwin L."/>
            <person name="Kyrpides N.C."/>
            <person name="Land M.L."/>
            <person name="Woyke T."/>
            <person name="Hutchins D.A."/>
            <person name="Hess W.R."/>
            <person name="Webb E.A."/>
        </authorList>
    </citation>
    <scope>NUCLEOTIDE SEQUENCE [LARGE SCALE GENOMIC DNA]</scope>
    <source>
        <strain>IMS101</strain>
    </source>
</reference>